<evidence type="ECO:0000255" key="1">
    <source>
        <dbReference type="HAMAP-Rule" id="MF_00462"/>
    </source>
</evidence>
<reference key="1">
    <citation type="submission" date="2007-10" db="EMBL/GenBank/DDBJ databases">
        <title>Complete sequence of Shewanella pealeana ATCC 700345.</title>
        <authorList>
            <consortium name="US DOE Joint Genome Institute"/>
            <person name="Copeland A."/>
            <person name="Lucas S."/>
            <person name="Lapidus A."/>
            <person name="Barry K."/>
            <person name="Glavina del Rio T."/>
            <person name="Dalin E."/>
            <person name="Tice H."/>
            <person name="Pitluck S."/>
            <person name="Chertkov O."/>
            <person name="Brettin T."/>
            <person name="Bruce D."/>
            <person name="Detter J.C."/>
            <person name="Han C."/>
            <person name="Schmutz J."/>
            <person name="Larimer F."/>
            <person name="Land M."/>
            <person name="Hauser L."/>
            <person name="Kyrpides N."/>
            <person name="Kim E."/>
            <person name="Zhao J.-S.Z."/>
            <person name="Manno D."/>
            <person name="Hawari J."/>
            <person name="Richardson P."/>
        </authorList>
    </citation>
    <scope>NUCLEOTIDE SEQUENCE [LARGE SCALE GENOMIC DNA]</scope>
    <source>
        <strain>ATCC 700345 / ANG-SQ1</strain>
    </source>
</reference>
<keyword id="KW-0997">Cell inner membrane</keyword>
<keyword id="KW-1003">Cell membrane</keyword>
<keyword id="KW-0249">Electron transport</keyword>
<keyword id="KW-0285">Flavoprotein</keyword>
<keyword id="KW-0288">FMN</keyword>
<keyword id="KW-0472">Membrane</keyword>
<keyword id="KW-0597">Phosphoprotein</keyword>
<keyword id="KW-1185">Reference proteome</keyword>
<keyword id="KW-1278">Translocase</keyword>
<keyword id="KW-0812">Transmembrane</keyword>
<keyword id="KW-1133">Transmembrane helix</keyword>
<keyword id="KW-0813">Transport</keyword>
<accession>A8H539</accession>
<dbReference type="EC" id="7.-.-.-" evidence="1"/>
<dbReference type="EMBL" id="CP000851">
    <property type="protein sequence ID" value="ABV87676.1"/>
    <property type="molecule type" value="Genomic_DNA"/>
</dbReference>
<dbReference type="RefSeq" id="WP_012155590.1">
    <property type="nucleotide sequence ID" value="NC_009901.1"/>
</dbReference>
<dbReference type="SMR" id="A8H539"/>
<dbReference type="STRING" id="398579.Spea_2356"/>
<dbReference type="KEGG" id="spl:Spea_2356"/>
<dbReference type="eggNOG" id="COG4658">
    <property type="taxonomic scope" value="Bacteria"/>
</dbReference>
<dbReference type="HOGENOM" id="CLU_042020_0_0_6"/>
<dbReference type="OrthoDB" id="9776359at2"/>
<dbReference type="Proteomes" id="UP000002608">
    <property type="component" value="Chromosome"/>
</dbReference>
<dbReference type="GO" id="GO:0005886">
    <property type="term" value="C:plasma membrane"/>
    <property type="evidence" value="ECO:0007669"/>
    <property type="project" value="UniProtKB-SubCell"/>
</dbReference>
<dbReference type="GO" id="GO:0022900">
    <property type="term" value="P:electron transport chain"/>
    <property type="evidence" value="ECO:0007669"/>
    <property type="project" value="UniProtKB-UniRule"/>
</dbReference>
<dbReference type="GO" id="GO:0055085">
    <property type="term" value="P:transmembrane transport"/>
    <property type="evidence" value="ECO:0007669"/>
    <property type="project" value="InterPro"/>
</dbReference>
<dbReference type="HAMAP" id="MF_00462">
    <property type="entry name" value="RsxD_RnfD"/>
    <property type="match status" value="1"/>
</dbReference>
<dbReference type="InterPro" id="IPR004338">
    <property type="entry name" value="NqrB/RnfD"/>
</dbReference>
<dbReference type="InterPro" id="IPR011303">
    <property type="entry name" value="RnfD_bac"/>
</dbReference>
<dbReference type="NCBIfam" id="NF002011">
    <property type="entry name" value="PRK00816.1"/>
    <property type="match status" value="1"/>
</dbReference>
<dbReference type="NCBIfam" id="TIGR01946">
    <property type="entry name" value="rnfD"/>
    <property type="match status" value="1"/>
</dbReference>
<dbReference type="PANTHER" id="PTHR30578">
    <property type="entry name" value="ELECTRON TRANSPORT COMPLEX PROTEIN RNFD"/>
    <property type="match status" value="1"/>
</dbReference>
<dbReference type="PANTHER" id="PTHR30578:SF0">
    <property type="entry name" value="ION-TRANSLOCATING OXIDOREDUCTASE COMPLEX SUBUNIT D"/>
    <property type="match status" value="1"/>
</dbReference>
<dbReference type="Pfam" id="PF03116">
    <property type="entry name" value="NQR2_RnfD_RnfE"/>
    <property type="match status" value="1"/>
</dbReference>
<protein>
    <recommendedName>
        <fullName evidence="1">Ion-translocating oxidoreductase complex subunit D</fullName>
        <ecNumber evidence="1">7.-.-.-</ecNumber>
    </recommendedName>
    <alternativeName>
        <fullName evidence="1">Rnf electron transport complex subunit D</fullName>
    </alternativeName>
</protein>
<proteinExistence type="inferred from homology"/>
<feature type="chain" id="PRO_1000081156" description="Ion-translocating oxidoreductase complex subunit D">
    <location>
        <begin position="1"/>
        <end position="350"/>
    </location>
</feature>
<feature type="transmembrane region" description="Helical" evidence="1">
    <location>
        <begin position="37"/>
        <end position="57"/>
    </location>
</feature>
<feature type="transmembrane region" description="Helical" evidence="1">
    <location>
        <begin position="68"/>
        <end position="88"/>
    </location>
</feature>
<feature type="transmembrane region" description="Helical" evidence="1">
    <location>
        <begin position="89"/>
        <end position="109"/>
    </location>
</feature>
<feature type="transmembrane region" description="Helical" evidence="1">
    <location>
        <begin position="120"/>
        <end position="140"/>
    </location>
</feature>
<feature type="transmembrane region" description="Helical" evidence="1">
    <location>
        <begin position="212"/>
        <end position="232"/>
    </location>
</feature>
<feature type="transmembrane region" description="Helical" evidence="1">
    <location>
        <begin position="239"/>
        <end position="259"/>
    </location>
</feature>
<feature type="transmembrane region" description="Helical" evidence="1">
    <location>
        <begin position="265"/>
        <end position="285"/>
    </location>
</feature>
<feature type="transmembrane region" description="Helical" evidence="1">
    <location>
        <begin position="291"/>
        <end position="311"/>
    </location>
</feature>
<feature type="transmembrane region" description="Helical" evidence="1">
    <location>
        <begin position="315"/>
        <end position="335"/>
    </location>
</feature>
<feature type="modified residue" description="FMN phosphoryl threonine" evidence="1">
    <location>
        <position position="185"/>
    </location>
</feature>
<name>RNFD_SHEPA</name>
<comment type="function">
    <text evidence="1">Part of a membrane-bound complex that couples electron transfer with translocation of ions across the membrane.</text>
</comment>
<comment type="cofactor">
    <cofactor evidence="1">
        <name>FMN</name>
        <dbReference type="ChEBI" id="CHEBI:58210"/>
    </cofactor>
</comment>
<comment type="subunit">
    <text evidence="1">The complex is composed of six subunits: RnfA, RnfB, RnfC, RnfD, RnfE and RnfG.</text>
</comment>
<comment type="subcellular location">
    <subcellularLocation>
        <location evidence="1">Cell inner membrane</location>
        <topology evidence="1">Multi-pass membrane protein</topology>
    </subcellularLocation>
</comment>
<comment type="similarity">
    <text evidence="1">Belongs to the NqrB/RnfD family.</text>
</comment>
<organism>
    <name type="scientific">Shewanella pealeana (strain ATCC 700345 / ANG-SQ1)</name>
    <dbReference type="NCBI Taxonomy" id="398579"/>
    <lineage>
        <taxon>Bacteria</taxon>
        <taxon>Pseudomonadati</taxon>
        <taxon>Pseudomonadota</taxon>
        <taxon>Gammaproteobacteria</taxon>
        <taxon>Alteromonadales</taxon>
        <taxon>Shewanellaceae</taxon>
        <taxon>Shewanella</taxon>
    </lineage>
</organism>
<sequence length="350" mass="37616">MAFKLASSPHLKVQLQTQSVMRRVILCALPGIAAQCYFFGFGVLIQVMLAIVVALTAEAAVLALRKRAVLSTISDNSALLTAILIGVAIPPIAPWWLVVIGTLFAIVLVKQLYGGLGQNIFNPAMAAYVMLLISFPVQMTSWSIPTAIAQNPMDIGLTLQAIFGSMSAEQLSLYKLGFDGVAMATPLDTVKTDLSLGLTTSESLTKAIFSDGYGVGWFWVNMAYLAGGLIMLKLKVIRWHISFAILGSLFVCSSFGYLLSPDTHVGPLLQLFSGATMIAAFFIATDPVTAATSVKGRLLFGTLIGVMVYVIRTYGGYPDAFAFAVLLANLCAPFIDYYVKPRTYGHRTGN</sequence>
<gene>
    <name evidence="1" type="primary">rnfD</name>
    <name type="ordered locus">Spea_2356</name>
</gene>